<keyword id="KW-0001">2Fe-2S</keyword>
<keyword id="KW-0963">Cytoplasm</keyword>
<keyword id="KW-0408">Iron</keyword>
<keyword id="KW-0411">Iron-sulfur</keyword>
<keyword id="KW-0479">Metal-binding</keyword>
<keyword id="KW-0663">Pyridoxal phosphate</keyword>
<keyword id="KW-0808">Transferase</keyword>
<organism>
    <name type="scientific">Escherichia coli (strain ATCC 8739 / DSM 1576 / NBRC 3972 / NCIMB 8545 / WDCM 00012 / Crooks)</name>
    <dbReference type="NCBI Taxonomy" id="481805"/>
    <lineage>
        <taxon>Bacteria</taxon>
        <taxon>Pseudomonadati</taxon>
        <taxon>Pseudomonadota</taxon>
        <taxon>Gammaproteobacteria</taxon>
        <taxon>Enterobacterales</taxon>
        <taxon>Enterobacteriaceae</taxon>
        <taxon>Escherichia</taxon>
    </lineage>
</organism>
<gene>
    <name evidence="1" type="primary">iscS</name>
    <name type="ordered locus">EcolC_1147</name>
</gene>
<reference key="1">
    <citation type="submission" date="2008-02" db="EMBL/GenBank/DDBJ databases">
        <title>Complete sequence of Escherichia coli C str. ATCC 8739.</title>
        <authorList>
            <person name="Copeland A."/>
            <person name="Lucas S."/>
            <person name="Lapidus A."/>
            <person name="Glavina del Rio T."/>
            <person name="Dalin E."/>
            <person name="Tice H."/>
            <person name="Bruce D."/>
            <person name="Goodwin L."/>
            <person name="Pitluck S."/>
            <person name="Kiss H."/>
            <person name="Brettin T."/>
            <person name="Detter J.C."/>
            <person name="Han C."/>
            <person name="Kuske C.R."/>
            <person name="Schmutz J."/>
            <person name="Larimer F."/>
            <person name="Land M."/>
            <person name="Hauser L."/>
            <person name="Kyrpides N."/>
            <person name="Mikhailova N."/>
            <person name="Ingram L."/>
            <person name="Richardson P."/>
        </authorList>
    </citation>
    <scope>NUCLEOTIDE SEQUENCE [LARGE SCALE GENOMIC DNA]</scope>
    <source>
        <strain>ATCC 8739 / DSM 1576 / NBRC 3972 / NCIMB 8545 / WDCM 00012 / Crooks</strain>
    </source>
</reference>
<protein>
    <recommendedName>
        <fullName evidence="1">Cysteine desulfurase IscS</fullName>
        <ecNumber evidence="1">2.8.1.7</ecNumber>
    </recommendedName>
</protein>
<dbReference type="EC" id="2.8.1.7" evidence="1"/>
<dbReference type="EMBL" id="CP000946">
    <property type="protein sequence ID" value="ACA76814.1"/>
    <property type="molecule type" value="Genomic_DNA"/>
</dbReference>
<dbReference type="RefSeq" id="WP_001295373.1">
    <property type="nucleotide sequence ID" value="NZ_MTFT01000002.1"/>
</dbReference>
<dbReference type="BMRB" id="B1IWD1"/>
<dbReference type="SMR" id="B1IWD1"/>
<dbReference type="GeneID" id="93774606"/>
<dbReference type="KEGG" id="ecl:EcolC_1147"/>
<dbReference type="HOGENOM" id="CLU_003433_0_2_6"/>
<dbReference type="UniPathway" id="UPA00266"/>
<dbReference type="GO" id="GO:1990221">
    <property type="term" value="C:L-cysteine desulfurase complex"/>
    <property type="evidence" value="ECO:0007669"/>
    <property type="project" value="UniProtKB-ARBA"/>
</dbReference>
<dbReference type="GO" id="GO:0051537">
    <property type="term" value="F:2 iron, 2 sulfur cluster binding"/>
    <property type="evidence" value="ECO:0007669"/>
    <property type="project" value="UniProtKB-UniRule"/>
</dbReference>
<dbReference type="GO" id="GO:0031071">
    <property type="term" value="F:cysteine desulfurase activity"/>
    <property type="evidence" value="ECO:0007669"/>
    <property type="project" value="UniProtKB-UniRule"/>
</dbReference>
<dbReference type="GO" id="GO:0046872">
    <property type="term" value="F:metal ion binding"/>
    <property type="evidence" value="ECO:0007669"/>
    <property type="project" value="UniProtKB-KW"/>
</dbReference>
<dbReference type="GO" id="GO:0030170">
    <property type="term" value="F:pyridoxal phosphate binding"/>
    <property type="evidence" value="ECO:0007669"/>
    <property type="project" value="UniProtKB-UniRule"/>
</dbReference>
<dbReference type="GO" id="GO:0044571">
    <property type="term" value="P:[2Fe-2S] cluster assembly"/>
    <property type="evidence" value="ECO:0007669"/>
    <property type="project" value="UniProtKB-UniRule"/>
</dbReference>
<dbReference type="FunFam" id="3.40.640.10:FF:000003">
    <property type="entry name" value="Cysteine desulfurase IscS"/>
    <property type="match status" value="1"/>
</dbReference>
<dbReference type="FunFam" id="3.90.1150.10:FF:000002">
    <property type="entry name" value="Cysteine desulfurase IscS"/>
    <property type="match status" value="1"/>
</dbReference>
<dbReference type="Gene3D" id="3.90.1150.10">
    <property type="entry name" value="Aspartate Aminotransferase, domain 1"/>
    <property type="match status" value="1"/>
</dbReference>
<dbReference type="Gene3D" id="3.40.640.10">
    <property type="entry name" value="Type I PLP-dependent aspartate aminotransferase-like (Major domain)"/>
    <property type="match status" value="1"/>
</dbReference>
<dbReference type="HAMAP" id="MF_00331">
    <property type="entry name" value="Cys_desulf_IscS"/>
    <property type="match status" value="1"/>
</dbReference>
<dbReference type="InterPro" id="IPR000192">
    <property type="entry name" value="Aminotrans_V_dom"/>
</dbReference>
<dbReference type="InterPro" id="IPR020578">
    <property type="entry name" value="Aminotrans_V_PyrdxlP_BS"/>
</dbReference>
<dbReference type="InterPro" id="IPR010240">
    <property type="entry name" value="Cys_deSase_IscS"/>
</dbReference>
<dbReference type="InterPro" id="IPR016454">
    <property type="entry name" value="Cysteine_dSase"/>
</dbReference>
<dbReference type="InterPro" id="IPR015424">
    <property type="entry name" value="PyrdxlP-dep_Trfase"/>
</dbReference>
<dbReference type="InterPro" id="IPR015421">
    <property type="entry name" value="PyrdxlP-dep_Trfase_major"/>
</dbReference>
<dbReference type="InterPro" id="IPR015422">
    <property type="entry name" value="PyrdxlP-dep_Trfase_small"/>
</dbReference>
<dbReference type="NCBIfam" id="TIGR02006">
    <property type="entry name" value="IscS"/>
    <property type="match status" value="1"/>
</dbReference>
<dbReference type="NCBIfam" id="NF002806">
    <property type="entry name" value="PRK02948.1"/>
    <property type="match status" value="1"/>
</dbReference>
<dbReference type="NCBIfam" id="NF010611">
    <property type="entry name" value="PRK14012.1"/>
    <property type="match status" value="1"/>
</dbReference>
<dbReference type="PANTHER" id="PTHR11601:SF34">
    <property type="entry name" value="CYSTEINE DESULFURASE"/>
    <property type="match status" value="1"/>
</dbReference>
<dbReference type="PANTHER" id="PTHR11601">
    <property type="entry name" value="CYSTEINE DESULFURYLASE FAMILY MEMBER"/>
    <property type="match status" value="1"/>
</dbReference>
<dbReference type="Pfam" id="PF00266">
    <property type="entry name" value="Aminotran_5"/>
    <property type="match status" value="1"/>
</dbReference>
<dbReference type="PIRSF" id="PIRSF005572">
    <property type="entry name" value="NifS"/>
    <property type="match status" value="1"/>
</dbReference>
<dbReference type="SUPFAM" id="SSF53383">
    <property type="entry name" value="PLP-dependent transferases"/>
    <property type="match status" value="1"/>
</dbReference>
<dbReference type="PROSITE" id="PS00595">
    <property type="entry name" value="AA_TRANSFER_CLASS_5"/>
    <property type="match status" value="1"/>
</dbReference>
<sequence>MKLPIYLDYSATTPVDPRVAEKMMQFMTMDGTFGNPASRSHRFGWQAEEAVDIARNQIADLVGADPREIVFTSGATESDNLAIKGAANFYQKKGKHIITSKTEHKAVLDTCRQLEREGFEVTYLAPQRNGIIDLKELEAAMRDDTILVSIMHVNNEIGVVQDIAAIGEMCRARGIIYHVDATQSVGKLPIDLSQLKVDLMSFSGHKIYGPKGIGALYVRRKPRVRIEAQMHGGGHERGMRSGTLPVHQIVGMGEAYRIAKEEMATEMERLRGLRNRLWNGIKDIEEVYLNGDLEHGAPNILNVSFNYVEGESLIMALKDLAVSSGSACTSASLEPSYVLRALGLNDELAHSSIRFSLGRFTTEEEIDYTIELVRKSIGRLRDLSPLWEMYKQGVDLNSIEWAHH</sequence>
<proteinExistence type="inferred from homology"/>
<accession>B1IWD1</accession>
<feature type="chain" id="PRO_1000079204" description="Cysteine desulfurase IscS">
    <location>
        <begin position="1"/>
        <end position="404"/>
    </location>
</feature>
<feature type="active site" description="Cysteine persulfide intermediate" evidence="1">
    <location>
        <position position="328"/>
    </location>
</feature>
<feature type="binding site" evidence="1">
    <location>
        <begin position="75"/>
        <end position="76"/>
    </location>
    <ligand>
        <name>pyridoxal 5'-phosphate</name>
        <dbReference type="ChEBI" id="CHEBI:597326"/>
    </ligand>
</feature>
<feature type="binding site" evidence="1">
    <location>
        <position position="155"/>
    </location>
    <ligand>
        <name>pyridoxal 5'-phosphate</name>
        <dbReference type="ChEBI" id="CHEBI:597326"/>
    </ligand>
</feature>
<feature type="binding site" evidence="1">
    <location>
        <position position="183"/>
    </location>
    <ligand>
        <name>pyridoxal 5'-phosphate</name>
        <dbReference type="ChEBI" id="CHEBI:597326"/>
    </ligand>
</feature>
<feature type="binding site" evidence="1">
    <location>
        <begin position="203"/>
        <end position="205"/>
    </location>
    <ligand>
        <name>pyridoxal 5'-phosphate</name>
        <dbReference type="ChEBI" id="CHEBI:597326"/>
    </ligand>
</feature>
<feature type="binding site" evidence="1">
    <location>
        <position position="243"/>
    </location>
    <ligand>
        <name>pyridoxal 5'-phosphate</name>
        <dbReference type="ChEBI" id="CHEBI:597326"/>
    </ligand>
</feature>
<feature type="binding site" description="via persulfide group" evidence="1">
    <location>
        <position position="328"/>
    </location>
    <ligand>
        <name>[2Fe-2S] cluster</name>
        <dbReference type="ChEBI" id="CHEBI:190135"/>
        <note>ligand shared with IscU</note>
    </ligand>
</feature>
<feature type="modified residue" description="N6-(pyridoxal phosphate)lysine" evidence="1">
    <location>
        <position position="206"/>
    </location>
</feature>
<comment type="function">
    <text evidence="1">Master enzyme that delivers sulfur to a number of partners involved in Fe-S cluster assembly, tRNA modification or cofactor biosynthesis. Catalyzes the removal of elemental sulfur and selenium atoms from cysteine and selenocysteine to produce alanine. Functions as a sulfur delivery protein for Fe-S cluster synthesis onto IscU, an Fe-S scaffold assembly protein, as well as other S acceptor proteins. Also functions as a selenium delivery protein in the pathway for the biosynthesis of selenophosphate.</text>
</comment>
<comment type="catalytic activity">
    <reaction evidence="1">
        <text>(sulfur carrier)-H + L-cysteine = (sulfur carrier)-SH + L-alanine</text>
        <dbReference type="Rhea" id="RHEA:43892"/>
        <dbReference type="Rhea" id="RHEA-COMP:14737"/>
        <dbReference type="Rhea" id="RHEA-COMP:14739"/>
        <dbReference type="ChEBI" id="CHEBI:29917"/>
        <dbReference type="ChEBI" id="CHEBI:35235"/>
        <dbReference type="ChEBI" id="CHEBI:57972"/>
        <dbReference type="ChEBI" id="CHEBI:64428"/>
        <dbReference type="EC" id="2.8.1.7"/>
    </reaction>
</comment>
<comment type="cofactor">
    <cofactor evidence="1">
        <name>pyridoxal 5'-phosphate</name>
        <dbReference type="ChEBI" id="CHEBI:597326"/>
    </cofactor>
</comment>
<comment type="pathway">
    <text evidence="1">Cofactor biosynthesis; iron-sulfur cluster biosynthesis.</text>
</comment>
<comment type="subunit">
    <text evidence="1">Homodimer. Forms a heterotetramer with IscU, interacts with other sulfur acceptors.</text>
</comment>
<comment type="subcellular location">
    <subcellularLocation>
        <location evidence="1">Cytoplasm</location>
    </subcellularLocation>
</comment>
<comment type="similarity">
    <text evidence="1">Belongs to the class-V pyridoxal-phosphate-dependent aminotransferase family. NifS/IscS subfamily.</text>
</comment>
<evidence type="ECO:0000255" key="1">
    <source>
        <dbReference type="HAMAP-Rule" id="MF_00331"/>
    </source>
</evidence>
<name>ISCS_ECOLC</name>